<dbReference type="EMBL" id="AE016826">
    <property type="protein sequence ID" value="AAO26779.1"/>
    <property type="molecule type" value="Genomic_DNA"/>
</dbReference>
<dbReference type="RefSeq" id="WP_011091180.1">
    <property type="nucleotide sequence ID" value="NC_004545.1"/>
</dbReference>
<dbReference type="SMR" id="Q89B19"/>
<dbReference type="STRING" id="224915.bbp_036"/>
<dbReference type="KEGG" id="bab:bbp_036"/>
<dbReference type="eggNOG" id="COG0222">
    <property type="taxonomic scope" value="Bacteria"/>
</dbReference>
<dbReference type="HOGENOM" id="CLU_086499_3_2_6"/>
<dbReference type="OrthoDB" id="9811748at2"/>
<dbReference type="Proteomes" id="UP000000601">
    <property type="component" value="Chromosome"/>
</dbReference>
<dbReference type="GO" id="GO:0022625">
    <property type="term" value="C:cytosolic large ribosomal subunit"/>
    <property type="evidence" value="ECO:0007669"/>
    <property type="project" value="TreeGrafter"/>
</dbReference>
<dbReference type="GO" id="GO:0003729">
    <property type="term" value="F:mRNA binding"/>
    <property type="evidence" value="ECO:0007669"/>
    <property type="project" value="TreeGrafter"/>
</dbReference>
<dbReference type="GO" id="GO:0003735">
    <property type="term" value="F:structural constituent of ribosome"/>
    <property type="evidence" value="ECO:0007669"/>
    <property type="project" value="InterPro"/>
</dbReference>
<dbReference type="GO" id="GO:0006412">
    <property type="term" value="P:translation"/>
    <property type="evidence" value="ECO:0007669"/>
    <property type="project" value="UniProtKB-UniRule"/>
</dbReference>
<dbReference type="CDD" id="cd00387">
    <property type="entry name" value="Ribosomal_L7_L12"/>
    <property type="match status" value="1"/>
</dbReference>
<dbReference type="FunFam" id="3.30.1390.10:FF:000001">
    <property type="entry name" value="50S ribosomal protein L7/L12"/>
    <property type="match status" value="1"/>
</dbReference>
<dbReference type="Gene3D" id="3.30.1390.10">
    <property type="match status" value="1"/>
</dbReference>
<dbReference type="Gene3D" id="1.20.5.710">
    <property type="entry name" value="Single helix bin"/>
    <property type="match status" value="1"/>
</dbReference>
<dbReference type="HAMAP" id="MF_00368">
    <property type="entry name" value="Ribosomal_bL12"/>
    <property type="match status" value="1"/>
</dbReference>
<dbReference type="InterPro" id="IPR000206">
    <property type="entry name" value="Ribosomal_bL12"/>
</dbReference>
<dbReference type="InterPro" id="IPR013823">
    <property type="entry name" value="Ribosomal_bL12_C"/>
</dbReference>
<dbReference type="InterPro" id="IPR014719">
    <property type="entry name" value="Ribosomal_bL12_C/ClpS-like"/>
</dbReference>
<dbReference type="InterPro" id="IPR008932">
    <property type="entry name" value="Ribosomal_bL12_oligo"/>
</dbReference>
<dbReference type="InterPro" id="IPR036235">
    <property type="entry name" value="Ribosomal_bL12_oligo_N_sf"/>
</dbReference>
<dbReference type="NCBIfam" id="TIGR00855">
    <property type="entry name" value="L12"/>
    <property type="match status" value="1"/>
</dbReference>
<dbReference type="PANTHER" id="PTHR45987">
    <property type="entry name" value="39S RIBOSOMAL PROTEIN L12"/>
    <property type="match status" value="1"/>
</dbReference>
<dbReference type="PANTHER" id="PTHR45987:SF4">
    <property type="entry name" value="LARGE RIBOSOMAL SUBUNIT PROTEIN BL12M"/>
    <property type="match status" value="1"/>
</dbReference>
<dbReference type="Pfam" id="PF00542">
    <property type="entry name" value="Ribosomal_L12"/>
    <property type="match status" value="1"/>
</dbReference>
<dbReference type="Pfam" id="PF16320">
    <property type="entry name" value="Ribosomal_L12_N"/>
    <property type="match status" value="1"/>
</dbReference>
<dbReference type="SUPFAM" id="SSF54736">
    <property type="entry name" value="ClpS-like"/>
    <property type="match status" value="1"/>
</dbReference>
<dbReference type="SUPFAM" id="SSF48300">
    <property type="entry name" value="Ribosomal protein L7/12, oligomerisation (N-terminal) domain"/>
    <property type="match status" value="1"/>
</dbReference>
<feature type="chain" id="PRO_0000157512" description="Large ribosomal subunit protein bL12">
    <location>
        <begin position="1"/>
        <end position="122"/>
    </location>
</feature>
<protein>
    <recommendedName>
        <fullName evidence="1">Large ribosomal subunit protein bL12</fullName>
    </recommendedName>
    <alternativeName>
        <fullName evidence="2">50S ribosomal protein L7/L12</fullName>
    </alternativeName>
</protein>
<proteinExistence type="inferred from homology"/>
<accession>Q89B19</accession>
<evidence type="ECO:0000255" key="1">
    <source>
        <dbReference type="HAMAP-Rule" id="MF_00368"/>
    </source>
</evidence>
<evidence type="ECO:0000305" key="2"/>
<keyword id="KW-1185">Reference proteome</keyword>
<keyword id="KW-0687">Ribonucleoprotein</keyword>
<keyword id="KW-0689">Ribosomal protein</keyword>
<sequence length="122" mass="13111">MSITKEQILDAISEMSVMNIVELISDMEKKFGVSSIIPSSSTSTQNIETAEAKTEFDVLLKSIGGNKVSVIKAVRSATGLGLKEAKDLVESAPTIIKERITQDAAESLKKILNETGAEVEIK</sequence>
<comment type="function">
    <text evidence="1">Forms part of the ribosomal stalk which helps the ribosome interact with GTP-bound translation factors. Is thus essential for accurate translation.</text>
</comment>
<comment type="subunit">
    <text evidence="1">Homodimer. Part of the ribosomal stalk of the 50S ribosomal subunit. Forms a multimeric L10(L12)X complex, where L10 forms an elongated spine to which 2 to 4 L12 dimers bind in a sequential fashion. Binds GTP-bound translation factors.</text>
</comment>
<comment type="similarity">
    <text evidence="1">Belongs to the bacterial ribosomal protein bL12 family.</text>
</comment>
<name>RL7_BUCBP</name>
<reference key="1">
    <citation type="journal article" date="2003" name="Proc. Natl. Acad. Sci. U.S.A.">
        <title>Reductive genome evolution in Buchnera aphidicola.</title>
        <authorList>
            <person name="van Ham R.C.H.J."/>
            <person name="Kamerbeek J."/>
            <person name="Palacios C."/>
            <person name="Rausell C."/>
            <person name="Abascal F."/>
            <person name="Bastolla U."/>
            <person name="Fernandez J.M."/>
            <person name="Jimenez L."/>
            <person name="Postigo M."/>
            <person name="Silva F.J."/>
            <person name="Tamames J."/>
            <person name="Viguera E."/>
            <person name="Latorre A."/>
            <person name="Valencia A."/>
            <person name="Moran F."/>
            <person name="Moya A."/>
        </authorList>
    </citation>
    <scope>NUCLEOTIDE SEQUENCE [LARGE SCALE GENOMIC DNA]</scope>
    <source>
        <strain>Bp</strain>
    </source>
</reference>
<organism>
    <name type="scientific">Buchnera aphidicola subsp. Baizongia pistaciae (strain Bp)</name>
    <dbReference type="NCBI Taxonomy" id="224915"/>
    <lineage>
        <taxon>Bacteria</taxon>
        <taxon>Pseudomonadati</taxon>
        <taxon>Pseudomonadota</taxon>
        <taxon>Gammaproteobacteria</taxon>
        <taxon>Enterobacterales</taxon>
        <taxon>Erwiniaceae</taxon>
        <taxon>Buchnera</taxon>
    </lineage>
</organism>
<gene>
    <name evidence="1" type="primary">rplL</name>
    <name type="ordered locus">bbp_036</name>
</gene>